<reference key="1">
    <citation type="journal article" date="2001" name="J. Bacteriol.">
        <title>Genome of the bacterium Streptococcus pneumoniae strain R6.</title>
        <authorList>
            <person name="Hoskins J."/>
            <person name="Alborn W.E. Jr."/>
            <person name="Arnold J."/>
            <person name="Blaszczak L.C."/>
            <person name="Burgett S."/>
            <person name="DeHoff B.S."/>
            <person name="Estrem S.T."/>
            <person name="Fritz L."/>
            <person name="Fu D.-J."/>
            <person name="Fuller W."/>
            <person name="Geringer C."/>
            <person name="Gilmour R."/>
            <person name="Glass J.S."/>
            <person name="Khoja H."/>
            <person name="Kraft A.R."/>
            <person name="Lagace R.E."/>
            <person name="LeBlanc D.J."/>
            <person name="Lee L.N."/>
            <person name="Lefkowitz E.J."/>
            <person name="Lu J."/>
            <person name="Matsushima P."/>
            <person name="McAhren S.M."/>
            <person name="McHenney M."/>
            <person name="McLeaster K."/>
            <person name="Mundy C.W."/>
            <person name="Nicas T.I."/>
            <person name="Norris F.H."/>
            <person name="O'Gara M."/>
            <person name="Peery R.B."/>
            <person name="Robertson G.T."/>
            <person name="Rockey P."/>
            <person name="Sun P.-M."/>
            <person name="Winkler M.E."/>
            <person name="Yang Y."/>
            <person name="Young-Bellido M."/>
            <person name="Zhao G."/>
            <person name="Zook C.A."/>
            <person name="Baltz R.H."/>
            <person name="Jaskunas S.R."/>
            <person name="Rosteck P.R. Jr."/>
            <person name="Skatrud P.L."/>
            <person name="Glass J.I."/>
        </authorList>
    </citation>
    <scope>NUCLEOTIDE SEQUENCE [LARGE SCALE GENOMIC DNA]</scope>
    <source>
        <strain>ATCC BAA-255 / R6</strain>
    </source>
</reference>
<dbReference type="EC" id="1.1.1.86" evidence="1"/>
<dbReference type="EMBL" id="AE007317">
    <property type="protein sequence ID" value="AAK99207.1"/>
    <property type="molecule type" value="Genomic_DNA"/>
</dbReference>
<dbReference type="PIR" id="C97922">
    <property type="entry name" value="C97922"/>
</dbReference>
<dbReference type="RefSeq" id="NP_357997.1">
    <property type="nucleotide sequence ID" value="NC_003098.1"/>
</dbReference>
<dbReference type="RefSeq" id="WP_000218054.1">
    <property type="nucleotide sequence ID" value="NC_003098.1"/>
</dbReference>
<dbReference type="SMR" id="Q8DR03"/>
<dbReference type="STRING" id="171101.spr0403"/>
<dbReference type="GeneID" id="45652102"/>
<dbReference type="KEGG" id="spr:spr0403"/>
<dbReference type="PATRIC" id="fig|171101.6.peg.446"/>
<dbReference type="eggNOG" id="COG0059">
    <property type="taxonomic scope" value="Bacteria"/>
</dbReference>
<dbReference type="HOGENOM" id="CLU_033821_0_1_9"/>
<dbReference type="UniPathway" id="UPA00047">
    <property type="reaction ID" value="UER00056"/>
</dbReference>
<dbReference type="UniPathway" id="UPA00049">
    <property type="reaction ID" value="UER00060"/>
</dbReference>
<dbReference type="Proteomes" id="UP000000586">
    <property type="component" value="Chromosome"/>
</dbReference>
<dbReference type="GO" id="GO:0005829">
    <property type="term" value="C:cytosol"/>
    <property type="evidence" value="ECO:0000318"/>
    <property type="project" value="GO_Central"/>
</dbReference>
<dbReference type="GO" id="GO:0004455">
    <property type="term" value="F:ketol-acid reductoisomerase activity"/>
    <property type="evidence" value="ECO:0000318"/>
    <property type="project" value="GO_Central"/>
</dbReference>
<dbReference type="GO" id="GO:0000287">
    <property type="term" value="F:magnesium ion binding"/>
    <property type="evidence" value="ECO:0007669"/>
    <property type="project" value="UniProtKB-UniRule"/>
</dbReference>
<dbReference type="GO" id="GO:0050661">
    <property type="term" value="F:NADP binding"/>
    <property type="evidence" value="ECO:0007669"/>
    <property type="project" value="InterPro"/>
</dbReference>
<dbReference type="GO" id="GO:0009097">
    <property type="term" value="P:isoleucine biosynthetic process"/>
    <property type="evidence" value="ECO:0000318"/>
    <property type="project" value="GO_Central"/>
</dbReference>
<dbReference type="GO" id="GO:0009099">
    <property type="term" value="P:L-valine biosynthetic process"/>
    <property type="evidence" value="ECO:0000318"/>
    <property type="project" value="GO_Central"/>
</dbReference>
<dbReference type="FunFam" id="3.40.50.720:FF:000023">
    <property type="entry name" value="Ketol-acid reductoisomerase (NADP(+))"/>
    <property type="match status" value="1"/>
</dbReference>
<dbReference type="Gene3D" id="6.10.240.10">
    <property type="match status" value="1"/>
</dbReference>
<dbReference type="Gene3D" id="3.40.50.720">
    <property type="entry name" value="NAD(P)-binding Rossmann-like Domain"/>
    <property type="match status" value="1"/>
</dbReference>
<dbReference type="HAMAP" id="MF_00435">
    <property type="entry name" value="IlvC"/>
    <property type="match status" value="1"/>
</dbReference>
<dbReference type="InterPro" id="IPR008927">
    <property type="entry name" value="6-PGluconate_DH-like_C_sf"/>
</dbReference>
<dbReference type="InterPro" id="IPR013023">
    <property type="entry name" value="KARI"/>
</dbReference>
<dbReference type="InterPro" id="IPR000506">
    <property type="entry name" value="KARI_C"/>
</dbReference>
<dbReference type="InterPro" id="IPR013116">
    <property type="entry name" value="KARI_N"/>
</dbReference>
<dbReference type="InterPro" id="IPR014359">
    <property type="entry name" value="KARI_prok"/>
</dbReference>
<dbReference type="InterPro" id="IPR036291">
    <property type="entry name" value="NAD(P)-bd_dom_sf"/>
</dbReference>
<dbReference type="NCBIfam" id="TIGR00465">
    <property type="entry name" value="ilvC"/>
    <property type="match status" value="1"/>
</dbReference>
<dbReference type="NCBIfam" id="NF004017">
    <property type="entry name" value="PRK05479.1"/>
    <property type="match status" value="1"/>
</dbReference>
<dbReference type="NCBIfam" id="NF009940">
    <property type="entry name" value="PRK13403.1"/>
    <property type="match status" value="1"/>
</dbReference>
<dbReference type="PANTHER" id="PTHR21371">
    <property type="entry name" value="KETOL-ACID REDUCTOISOMERASE, MITOCHONDRIAL"/>
    <property type="match status" value="1"/>
</dbReference>
<dbReference type="PANTHER" id="PTHR21371:SF1">
    <property type="entry name" value="KETOL-ACID REDUCTOISOMERASE, MITOCHONDRIAL"/>
    <property type="match status" value="1"/>
</dbReference>
<dbReference type="Pfam" id="PF01450">
    <property type="entry name" value="KARI_C"/>
    <property type="match status" value="1"/>
</dbReference>
<dbReference type="Pfam" id="PF07991">
    <property type="entry name" value="KARI_N"/>
    <property type="match status" value="1"/>
</dbReference>
<dbReference type="PIRSF" id="PIRSF000116">
    <property type="entry name" value="IlvC_gammaproteo"/>
    <property type="match status" value="1"/>
</dbReference>
<dbReference type="SUPFAM" id="SSF48179">
    <property type="entry name" value="6-phosphogluconate dehydrogenase C-terminal domain-like"/>
    <property type="match status" value="1"/>
</dbReference>
<dbReference type="SUPFAM" id="SSF51735">
    <property type="entry name" value="NAD(P)-binding Rossmann-fold domains"/>
    <property type="match status" value="1"/>
</dbReference>
<dbReference type="PROSITE" id="PS51851">
    <property type="entry name" value="KARI_C"/>
    <property type="match status" value="1"/>
</dbReference>
<dbReference type="PROSITE" id="PS51850">
    <property type="entry name" value="KARI_N"/>
    <property type="match status" value="1"/>
</dbReference>
<protein>
    <recommendedName>
        <fullName evidence="1">Ketol-acid reductoisomerase (NADP(+))</fullName>
        <shortName evidence="1">KARI</shortName>
        <ecNumber evidence="1">1.1.1.86</ecNumber>
    </recommendedName>
    <alternativeName>
        <fullName evidence="1">Acetohydroxy-acid isomeroreductase</fullName>
        <shortName evidence="1">AHIR</shortName>
    </alternativeName>
    <alternativeName>
        <fullName evidence="1">Alpha-keto-beta-hydroxylacyl reductoisomerase</fullName>
    </alternativeName>
    <alternativeName>
        <fullName evidence="1">Ketol-acid reductoisomerase type 1</fullName>
    </alternativeName>
    <alternativeName>
        <fullName evidence="1">Ketol-acid reductoisomerase type I</fullName>
    </alternativeName>
</protein>
<keyword id="KW-0028">Amino-acid biosynthesis</keyword>
<keyword id="KW-0100">Branched-chain amino acid biosynthesis</keyword>
<keyword id="KW-0460">Magnesium</keyword>
<keyword id="KW-0479">Metal-binding</keyword>
<keyword id="KW-0521">NADP</keyword>
<keyword id="KW-0560">Oxidoreductase</keyword>
<keyword id="KW-1185">Reference proteome</keyword>
<name>ILVC_STRR6</name>
<evidence type="ECO:0000255" key="1">
    <source>
        <dbReference type="HAMAP-Rule" id="MF_00435"/>
    </source>
</evidence>
<evidence type="ECO:0000255" key="2">
    <source>
        <dbReference type="PROSITE-ProRule" id="PRU01197"/>
    </source>
</evidence>
<evidence type="ECO:0000255" key="3">
    <source>
        <dbReference type="PROSITE-ProRule" id="PRU01198"/>
    </source>
</evidence>
<comment type="function">
    <text evidence="1">Involved in the biosynthesis of branched-chain amino acids (BCAA). Catalyzes an alkyl-migration followed by a ketol-acid reduction of (S)-2-acetolactate (S2AL) to yield (R)-2,3-dihydroxy-isovalerate. In the isomerase reaction, S2AL is rearranged via a Mg-dependent methyl migration to produce 3-hydroxy-3-methyl-2-ketobutyrate (HMKB). In the reductase reaction, this 2-ketoacid undergoes a metal-dependent reduction by NADPH to yield (R)-2,3-dihydroxy-isovalerate.</text>
</comment>
<comment type="catalytic activity">
    <reaction evidence="1">
        <text>(2R)-2,3-dihydroxy-3-methylbutanoate + NADP(+) = (2S)-2-acetolactate + NADPH + H(+)</text>
        <dbReference type="Rhea" id="RHEA:22068"/>
        <dbReference type="ChEBI" id="CHEBI:15378"/>
        <dbReference type="ChEBI" id="CHEBI:49072"/>
        <dbReference type="ChEBI" id="CHEBI:57783"/>
        <dbReference type="ChEBI" id="CHEBI:58349"/>
        <dbReference type="ChEBI" id="CHEBI:58476"/>
        <dbReference type="EC" id="1.1.1.86"/>
    </reaction>
</comment>
<comment type="catalytic activity">
    <reaction evidence="1">
        <text>(2R,3R)-2,3-dihydroxy-3-methylpentanoate + NADP(+) = (S)-2-ethyl-2-hydroxy-3-oxobutanoate + NADPH + H(+)</text>
        <dbReference type="Rhea" id="RHEA:13493"/>
        <dbReference type="ChEBI" id="CHEBI:15378"/>
        <dbReference type="ChEBI" id="CHEBI:49256"/>
        <dbReference type="ChEBI" id="CHEBI:49258"/>
        <dbReference type="ChEBI" id="CHEBI:57783"/>
        <dbReference type="ChEBI" id="CHEBI:58349"/>
        <dbReference type="EC" id="1.1.1.86"/>
    </reaction>
</comment>
<comment type="cofactor">
    <cofactor evidence="1">
        <name>Mg(2+)</name>
        <dbReference type="ChEBI" id="CHEBI:18420"/>
    </cofactor>
    <text evidence="1">Binds 2 magnesium ions per subunit.</text>
</comment>
<comment type="pathway">
    <text evidence="1">Amino-acid biosynthesis; L-isoleucine biosynthesis; L-isoleucine from 2-oxobutanoate: step 2/4.</text>
</comment>
<comment type="pathway">
    <text evidence="1">Amino-acid biosynthesis; L-valine biosynthesis; L-valine from pyruvate: step 2/4.</text>
</comment>
<comment type="similarity">
    <text evidence="1">Belongs to the ketol-acid reductoisomerase family.</text>
</comment>
<proteinExistence type="inferred from homology"/>
<sequence length="340" mass="37350">MTVQMEYEKDVKVAALDGKKIAVIGYGSQGHAHAQNLRDSGRDVIIGVRPGKSFDKAKEDGFDTYTVAEATKLADVIMILAPDEIQQELYEAEIAPNLEAGNAVGFAHGFNIHFEFIKVPADVDVFMCAPKGPGHLVRRTYEEGFGVPALYAVYQDATGNAKNIAMDWCKGVGAARVGLLETTYKEETEEDLFGEQAVLCGGLTALIEAGFEVLTEAGYAPELAYFEVLHEMKLIVDLIYEGGFKKMRQSISNTAEYGDYVSGPRVITEQVKENMKAVLADIQNGKFANDFVNDYKAGRPKLTAYREQAANLEIEKVGAELRKAMPFVGKNDDDAFKIYN</sequence>
<organism>
    <name type="scientific">Streptococcus pneumoniae (strain ATCC BAA-255 / R6)</name>
    <dbReference type="NCBI Taxonomy" id="171101"/>
    <lineage>
        <taxon>Bacteria</taxon>
        <taxon>Bacillati</taxon>
        <taxon>Bacillota</taxon>
        <taxon>Bacilli</taxon>
        <taxon>Lactobacillales</taxon>
        <taxon>Streptococcaceae</taxon>
        <taxon>Streptococcus</taxon>
    </lineage>
</organism>
<feature type="chain" id="PRO_0000151368" description="Ketol-acid reductoisomerase (NADP(+))">
    <location>
        <begin position="1"/>
        <end position="340"/>
    </location>
</feature>
<feature type="domain" description="KARI N-terminal Rossmann" evidence="2">
    <location>
        <begin position="3"/>
        <end position="182"/>
    </location>
</feature>
<feature type="domain" description="KARI C-terminal knotted" evidence="3">
    <location>
        <begin position="183"/>
        <end position="328"/>
    </location>
</feature>
<feature type="active site" evidence="1">
    <location>
        <position position="108"/>
    </location>
</feature>
<feature type="binding site" evidence="1">
    <location>
        <begin position="26"/>
        <end position="29"/>
    </location>
    <ligand>
        <name>NADP(+)</name>
        <dbReference type="ChEBI" id="CHEBI:58349"/>
    </ligand>
</feature>
<feature type="binding site" evidence="1">
    <location>
        <position position="49"/>
    </location>
    <ligand>
        <name>NADP(+)</name>
        <dbReference type="ChEBI" id="CHEBI:58349"/>
    </ligand>
</feature>
<feature type="binding site" evidence="1">
    <location>
        <position position="53"/>
    </location>
    <ligand>
        <name>NADP(+)</name>
        <dbReference type="ChEBI" id="CHEBI:58349"/>
    </ligand>
</feature>
<feature type="binding site" evidence="1">
    <location>
        <begin position="83"/>
        <end position="86"/>
    </location>
    <ligand>
        <name>NADP(+)</name>
        <dbReference type="ChEBI" id="CHEBI:58349"/>
    </ligand>
</feature>
<feature type="binding site" evidence="1">
    <location>
        <position position="134"/>
    </location>
    <ligand>
        <name>NADP(+)</name>
        <dbReference type="ChEBI" id="CHEBI:58349"/>
    </ligand>
</feature>
<feature type="binding site" evidence="1">
    <location>
        <position position="191"/>
    </location>
    <ligand>
        <name>Mg(2+)</name>
        <dbReference type="ChEBI" id="CHEBI:18420"/>
        <label>1</label>
    </ligand>
</feature>
<feature type="binding site" evidence="1">
    <location>
        <position position="191"/>
    </location>
    <ligand>
        <name>Mg(2+)</name>
        <dbReference type="ChEBI" id="CHEBI:18420"/>
        <label>2</label>
    </ligand>
</feature>
<feature type="binding site" evidence="1">
    <location>
        <position position="195"/>
    </location>
    <ligand>
        <name>Mg(2+)</name>
        <dbReference type="ChEBI" id="CHEBI:18420"/>
        <label>1</label>
    </ligand>
</feature>
<feature type="binding site" evidence="1">
    <location>
        <position position="227"/>
    </location>
    <ligand>
        <name>Mg(2+)</name>
        <dbReference type="ChEBI" id="CHEBI:18420"/>
        <label>2</label>
    </ligand>
</feature>
<feature type="binding site" evidence="1">
    <location>
        <position position="231"/>
    </location>
    <ligand>
        <name>Mg(2+)</name>
        <dbReference type="ChEBI" id="CHEBI:18420"/>
        <label>2</label>
    </ligand>
</feature>
<feature type="binding site" evidence="1">
    <location>
        <position position="252"/>
    </location>
    <ligand>
        <name>substrate</name>
    </ligand>
</feature>
<accession>Q8DR03</accession>
<gene>
    <name evidence="1" type="primary">ilvC</name>
    <name type="ordered locus">spr0403</name>
</gene>